<organism>
    <name type="scientific">Aspergillus terreus (strain NIH 2624 / FGSC A1156)</name>
    <dbReference type="NCBI Taxonomy" id="341663"/>
    <lineage>
        <taxon>Eukaryota</taxon>
        <taxon>Fungi</taxon>
        <taxon>Dikarya</taxon>
        <taxon>Ascomycota</taxon>
        <taxon>Pezizomycotina</taxon>
        <taxon>Eurotiomycetes</taxon>
        <taxon>Eurotiomycetidae</taxon>
        <taxon>Eurotiales</taxon>
        <taxon>Aspergillaceae</taxon>
        <taxon>Aspergillus</taxon>
        <taxon>Aspergillus subgen. Circumdati</taxon>
    </lineage>
</organism>
<reference key="1">
    <citation type="submission" date="2005-09" db="EMBL/GenBank/DDBJ databases">
        <title>Annotation of the Aspergillus terreus NIH2624 genome.</title>
        <authorList>
            <person name="Birren B.W."/>
            <person name="Lander E.S."/>
            <person name="Galagan J.E."/>
            <person name="Nusbaum C."/>
            <person name="Devon K."/>
            <person name="Henn M."/>
            <person name="Ma L.-J."/>
            <person name="Jaffe D.B."/>
            <person name="Butler J."/>
            <person name="Alvarez P."/>
            <person name="Gnerre S."/>
            <person name="Grabherr M."/>
            <person name="Kleber M."/>
            <person name="Mauceli E.W."/>
            <person name="Brockman W."/>
            <person name="Rounsley S."/>
            <person name="Young S.K."/>
            <person name="LaButti K."/>
            <person name="Pushparaj V."/>
            <person name="DeCaprio D."/>
            <person name="Crawford M."/>
            <person name="Koehrsen M."/>
            <person name="Engels R."/>
            <person name="Montgomery P."/>
            <person name="Pearson M."/>
            <person name="Howarth C."/>
            <person name="Larson L."/>
            <person name="Luoma S."/>
            <person name="White J."/>
            <person name="Alvarado L."/>
            <person name="Kodira C.D."/>
            <person name="Zeng Q."/>
            <person name="Oleary S."/>
            <person name="Yandava C."/>
            <person name="Denning D.W."/>
            <person name="Nierman W.C."/>
            <person name="Milne T."/>
            <person name="Madden K."/>
        </authorList>
    </citation>
    <scope>NUCLEOTIDE SEQUENCE [LARGE SCALE GENOMIC DNA]</scope>
    <source>
        <strain>NIH 2624 / FGSC A1156</strain>
    </source>
</reference>
<reference key="2">
    <citation type="journal article" date="2020" name="J. Nat. Prod.">
        <title>Discovery and characterization of a PKS-NRPS hybrid in Aspergillus terreus by genome mining.</title>
        <authorList>
            <person name="Tang S."/>
            <person name="Zhang W."/>
            <person name="Li Z."/>
            <person name="Li H."/>
            <person name="Geng C."/>
            <person name="Huang X."/>
            <person name="Lu X."/>
        </authorList>
    </citation>
    <scope>INDUCTION</scope>
    <scope>FUNCTION</scope>
    <scope>DISRUPTION PHENOTYPE</scope>
    <scope>PATHWAY</scope>
</reference>
<name>PYTA_ASPTN</name>
<gene>
    <name evidence="6" type="primary">pytA</name>
    <name type="ORF">ATEG_00913</name>
</gene>
<protein>
    <recommendedName>
        <fullName evidence="6">Hybrid PKS-NRPS synthetase pytA</fullName>
        <ecNumber evidence="8">2.3.1.-</ecNumber>
        <ecNumber evidence="8">6.3.2.-</ecNumber>
    </recommendedName>
    <alternativeName>
        <fullName evidence="6">Pyranterreones biosynthesis cluster protein A</fullName>
    </alternativeName>
</protein>
<accession>Q0CZH1</accession>
<comment type="function">
    <text evidence="5 8">Hybrid PKS-NRPS synthetase; part of the gene cluster that mediates the biosynthesis of pyranterreones, a family of antioxidative compounds (PubMed:32077283). The first step of pyranonigrins biosynthesis is performed by the hybrid PKS-NRPS synthetase pytA that condenses 4 malonyl-CoA units ato the acetyl starter unit by the modular PKS of pytA (PubMed:32077283). The acyl chain is then connected to an L-serine through the amide bond by the modular NRPS of pytA (PubMed:32077283). A tetramic acid is formed and released from the PKS-NRPS pytA to give pyranterreone 5 with the help of the thioesterase pytI (PubMed:32077283). Pyranterreone 5 could be methylated by pytC to afford pyranterreone 6 (Probable). Both pyranterreones 5 and 6 are subsequently oxidized by the FAD-linked oxidoreductase pytB and the cytochrome P450 monooxygenase pytD to form the fused gamma-pyrone core, resulting in pyranterreones 7 and 11, respectively (PubMed:32077283). The hydroxy group at C-8 of pyranterreones 7 and 11 are dehydrated by the aspartyl protease pytH to form a delta-7 double bond to give pyranterreones 3 and 1, 2 accordingly (PubMed:32077283). The exo-methylene of pyranterreone 3 could be reduced into a pendant methyl by reductase pytE to provide pyranterreone 4, also known as cordylactam (Probable). Pyranterreone 4 can be reconverted to pyranterreone 3 through pytB-catalyzed dehydrogenation or further oxidized to pyranterreones 9 and 10 (Probable).</text>
</comment>
<comment type="pathway">
    <text evidence="5">Secondary metabolite biosynthesis.</text>
</comment>
<comment type="induction">
    <text evidence="5">Expression is positively regulated by the cluster-specific transcription factor pytR.</text>
</comment>
<comment type="domain">
    <text evidence="1">The N-terminal part acts as a polyketide synthase and includes a ketosynthase (KS) domain that catalyzes repeated decarboxylative condensation to elongate the polyketide backbone; a malonyl-CoA:ACP transacylase (MAT) domain that selects and transfers the extender unit malonyl-CoA; a dehydratase (DH) domain that reduces hydroxyl groups to enoyl groups; an enoylreductase (ER) domain that reduces enoyl groups to alkyl group; a ketoreductase (KR) domain that catalyzes beta-ketoreduction steps; and an acyl-carrier protein (ACP) that serves as the tether of the growing and completed polyketide via its phosphopantetheinyl arm.</text>
</comment>
<comment type="domain">
    <text evidence="1">The C-terminal part acts as an NRP synthetase composed of discrete domains (adenylation (A), thiolation (T) or peptidyl carrier protein (PCP) and condensation (C) domains) which when grouped together are referred to as a single module. Each module is responsible for the recognition (via the A domain) and incorporation of a single amino acid into the growing peptide product. PytA contains one module and terminates in a thioesterase domain (TE) that releases the newly synthesized peptide from the enzyme.</text>
</comment>
<comment type="disruption phenotype">
    <text evidence="5">Impairs the production of pyranterreones.</text>
</comment>
<comment type="similarity">
    <text evidence="7">In the C-terminal section; belongs to the NRP synthetase family.</text>
</comment>
<comment type="caution">
    <text evidence="8">In A.terreus strain NIH2624, ATEG_00913 misses most of its catalytic domains. This difference may be due to errors in the sequencing or the automatic annotation of genome. The protein consists of a highly reducing PKS module (KS-AT-DH-ER-KR-ACP), a single NRPS module (C-A-PCP), and C-terminal TD domain.</text>
</comment>
<dbReference type="EC" id="2.3.1.-" evidence="8"/>
<dbReference type="EC" id="6.3.2.-" evidence="8"/>
<dbReference type="EMBL" id="CH476594">
    <property type="protein sequence ID" value="EAU39559.1"/>
    <property type="molecule type" value="Genomic_DNA"/>
</dbReference>
<dbReference type="RefSeq" id="XP_001210999.1">
    <property type="nucleotide sequence ID" value="XM_001210999.1"/>
</dbReference>
<dbReference type="SMR" id="Q0CZH1"/>
<dbReference type="STRING" id="341663.Q0CZH1"/>
<dbReference type="EnsemblFungi" id="EAU39559">
    <property type="protein sequence ID" value="EAU39559"/>
    <property type="gene ID" value="ATEG_00913"/>
</dbReference>
<dbReference type="GeneID" id="4355676"/>
<dbReference type="VEuPathDB" id="FungiDB:ATEG_00913"/>
<dbReference type="eggNOG" id="KOG1202">
    <property type="taxonomic scope" value="Eukaryota"/>
</dbReference>
<dbReference type="HOGENOM" id="CLU_000022_16_6_1"/>
<dbReference type="OMA" id="ECIFEAF"/>
<dbReference type="OrthoDB" id="329835at2759"/>
<dbReference type="Proteomes" id="UP000007963">
    <property type="component" value="Unassembled WGS sequence"/>
</dbReference>
<dbReference type="GO" id="GO:0004315">
    <property type="term" value="F:3-oxoacyl-[acyl-carrier-protein] synthase activity"/>
    <property type="evidence" value="ECO:0007669"/>
    <property type="project" value="InterPro"/>
</dbReference>
<dbReference type="GO" id="GO:0004312">
    <property type="term" value="F:fatty acid synthase activity"/>
    <property type="evidence" value="ECO:0007669"/>
    <property type="project" value="TreeGrafter"/>
</dbReference>
<dbReference type="GO" id="GO:0016874">
    <property type="term" value="F:ligase activity"/>
    <property type="evidence" value="ECO:0007669"/>
    <property type="project" value="UniProtKB-KW"/>
</dbReference>
<dbReference type="GO" id="GO:0006633">
    <property type="term" value="P:fatty acid biosynthetic process"/>
    <property type="evidence" value="ECO:0007669"/>
    <property type="project" value="InterPro"/>
</dbReference>
<dbReference type="GO" id="GO:0044550">
    <property type="term" value="P:secondary metabolite biosynthetic process"/>
    <property type="evidence" value="ECO:0007669"/>
    <property type="project" value="TreeGrafter"/>
</dbReference>
<dbReference type="CDD" id="cd00833">
    <property type="entry name" value="PKS"/>
    <property type="match status" value="1"/>
</dbReference>
<dbReference type="Gene3D" id="3.40.47.10">
    <property type="match status" value="1"/>
</dbReference>
<dbReference type="Gene3D" id="3.40.366.10">
    <property type="entry name" value="Malonyl-Coenzyme A Acyl Carrier Protein, domain 2"/>
    <property type="match status" value="1"/>
</dbReference>
<dbReference type="InterPro" id="IPR001227">
    <property type="entry name" value="Ac_transferase_dom_sf"/>
</dbReference>
<dbReference type="InterPro" id="IPR014043">
    <property type="entry name" value="Acyl_transferase_dom"/>
</dbReference>
<dbReference type="InterPro" id="IPR016035">
    <property type="entry name" value="Acyl_Trfase/lysoPLipase"/>
</dbReference>
<dbReference type="InterPro" id="IPR018201">
    <property type="entry name" value="Ketoacyl_synth_AS"/>
</dbReference>
<dbReference type="InterPro" id="IPR014031">
    <property type="entry name" value="Ketoacyl_synth_C"/>
</dbReference>
<dbReference type="InterPro" id="IPR014030">
    <property type="entry name" value="Ketoacyl_synth_N"/>
</dbReference>
<dbReference type="InterPro" id="IPR016036">
    <property type="entry name" value="Malonyl_transacylase_ACP-bd"/>
</dbReference>
<dbReference type="InterPro" id="IPR032821">
    <property type="entry name" value="PKS_assoc"/>
</dbReference>
<dbReference type="InterPro" id="IPR020841">
    <property type="entry name" value="PKS_Beta-ketoAc_synthase_dom"/>
</dbReference>
<dbReference type="InterPro" id="IPR050091">
    <property type="entry name" value="PKS_NRPS_Biosynth_Enz"/>
</dbReference>
<dbReference type="InterPro" id="IPR016039">
    <property type="entry name" value="Thiolase-like"/>
</dbReference>
<dbReference type="PANTHER" id="PTHR43775">
    <property type="entry name" value="FATTY ACID SYNTHASE"/>
    <property type="match status" value="1"/>
</dbReference>
<dbReference type="PANTHER" id="PTHR43775:SF20">
    <property type="entry name" value="HYBRID PKS-NRPS SYNTHETASE APDA"/>
    <property type="match status" value="1"/>
</dbReference>
<dbReference type="Pfam" id="PF00698">
    <property type="entry name" value="Acyl_transf_1"/>
    <property type="match status" value="1"/>
</dbReference>
<dbReference type="Pfam" id="PF16197">
    <property type="entry name" value="KAsynt_C_assoc"/>
    <property type="match status" value="1"/>
</dbReference>
<dbReference type="Pfam" id="PF00109">
    <property type="entry name" value="ketoacyl-synt"/>
    <property type="match status" value="1"/>
</dbReference>
<dbReference type="Pfam" id="PF02801">
    <property type="entry name" value="Ketoacyl-synt_C"/>
    <property type="match status" value="1"/>
</dbReference>
<dbReference type="SMART" id="SM00827">
    <property type="entry name" value="PKS_AT"/>
    <property type="match status" value="1"/>
</dbReference>
<dbReference type="SMART" id="SM00825">
    <property type="entry name" value="PKS_KS"/>
    <property type="match status" value="1"/>
</dbReference>
<dbReference type="SUPFAM" id="SSF52151">
    <property type="entry name" value="FabD/lysophospholipase-like"/>
    <property type="match status" value="1"/>
</dbReference>
<dbReference type="SUPFAM" id="SSF55048">
    <property type="entry name" value="Probable ACP-binding domain of malonyl-CoA ACP transacylase"/>
    <property type="match status" value="1"/>
</dbReference>
<dbReference type="SUPFAM" id="SSF53901">
    <property type="entry name" value="Thiolase-like"/>
    <property type="match status" value="1"/>
</dbReference>
<dbReference type="PROSITE" id="PS00606">
    <property type="entry name" value="KS3_1"/>
    <property type="match status" value="1"/>
</dbReference>
<dbReference type="PROSITE" id="PS52004">
    <property type="entry name" value="KS3_2"/>
    <property type="match status" value="1"/>
</dbReference>
<keyword id="KW-0436">Ligase</keyword>
<keyword id="KW-0511">Multifunctional enzyme</keyword>
<keyword id="KW-0596">Phosphopantetheine</keyword>
<keyword id="KW-0597">Phosphoprotein</keyword>
<keyword id="KW-1185">Reference proteome</keyword>
<keyword id="KW-0808">Transferase</keyword>
<feature type="chain" id="PRO_0000450466" description="Hybrid PKS-NRPS synthetase pytA">
    <location>
        <begin position="1" status="less than"/>
        <end position="666" status="greater than"/>
    </location>
</feature>
<feature type="domain" description="Ketosynthase family 3 (KS3)" evidence="3 8">
    <location>
        <begin position="1"/>
        <end position="340"/>
    </location>
</feature>
<feature type="region of interest" description="Malonyl-CoA:ACP transacylase (MAT) domain" evidence="2 8">
    <location>
        <begin position="455"/>
        <end position="665"/>
    </location>
</feature>
<feature type="active site" description="For beta-ketoacyl synthase activity" evidence="3">
    <location>
        <position position="87"/>
    </location>
</feature>
<feature type="active site" description="For beta-ketoacyl synthase activity" evidence="3">
    <location>
        <position position="222"/>
    </location>
</feature>
<feature type="active site" description="For beta-ketoacyl synthase activity" evidence="3">
    <location>
        <position position="260"/>
    </location>
</feature>
<feature type="active site" description="For malonyltransferase activity" evidence="4">
    <location>
        <position position="548"/>
    </location>
</feature>
<feature type="non-terminal residue">
    <location>
        <position position="1"/>
    </location>
</feature>
<feature type="non-terminal residue">
    <location>
        <position position="666"/>
    </location>
</feature>
<sequence length="666" mass="72588">MDPQQRLLLEVVYEALEDAGITLDEIQGSLTSVYCGCFTNDYNAMTTKDLEYYPKYTVTGTGNSILANRISYFYNLHGPSATVDTACSSSLVCFHLGAQSLRDAEADISIVVGSALHFDPNIFITMTDLGMLSTDGRCRHGDAAGSGYVRGEGIAAMVLKRQDRAQADGDHIRAVVRGTGVNHDGRKQGITLPSARAQADLITSTYERAGLEPAETTYVECHGTGTKAGDPRELRAVHEVFCRHRPDTLHVGSVKTNIGHLEGASGIAGLMKATMALEKKIIPPNMHFSTPNPEVDFKNWKLEIPTEPKVWEMGRRTIPRRASINSFGYGGTNAHAILEEYNSFGSKTTACQQPTVSLPPELAAMVERRPYLLPLTSHSERAGELWAERLAQYLTENEASVADVALSLSTRRTMHRFRSFAVSADMEKVIERIRDPPPGAAWKSKLDTIPRIGFVFTGQGAQWFGMARSLLEQCPLFLQTIRKCDRILQALPSHRPTWSVEAELLKSQQDTMLGRTEYSQPICTAVQLALVDVLAHWGVKPSGVVGHSSGELAATYAAGLLSFENALVAAYYRGVHMGSGAAAPGSMPGAMMAVGMTEAEVTAELEPYRGRIAIAAMNSPSSFTVSGDEDAVVELQQALTDRKVFARRLQVAQACVFVHSLVIKRY</sequence>
<proteinExistence type="evidence at transcript level"/>
<evidence type="ECO:0000250" key="1">
    <source>
        <dbReference type="UniProtKB" id="P9WEZ4"/>
    </source>
</evidence>
<evidence type="ECO:0000255" key="2"/>
<evidence type="ECO:0000255" key="3">
    <source>
        <dbReference type="PROSITE-ProRule" id="PRU01348"/>
    </source>
</evidence>
<evidence type="ECO:0000255" key="4">
    <source>
        <dbReference type="PROSITE-ProRule" id="PRU10022"/>
    </source>
</evidence>
<evidence type="ECO:0000269" key="5">
    <source>
    </source>
</evidence>
<evidence type="ECO:0000303" key="6">
    <source>
    </source>
</evidence>
<evidence type="ECO:0000305" key="7"/>
<evidence type="ECO:0000305" key="8">
    <source>
    </source>
</evidence>